<proteinExistence type="inferred from homology"/>
<organism>
    <name type="scientific">Rubia tinctorum</name>
    <name type="common">Madder</name>
    <dbReference type="NCBI Taxonomy" id="29802"/>
    <lineage>
        <taxon>Eukaryota</taxon>
        <taxon>Viridiplantae</taxon>
        <taxon>Streptophyta</taxon>
        <taxon>Embryophyta</taxon>
        <taxon>Tracheophyta</taxon>
        <taxon>Spermatophyta</taxon>
        <taxon>Magnoliopsida</taxon>
        <taxon>eudicotyledons</taxon>
        <taxon>Gunneridae</taxon>
        <taxon>Pentapetalae</taxon>
        <taxon>asterids</taxon>
        <taxon>lamiids</taxon>
        <taxon>Gentianales</taxon>
        <taxon>Rubiaceae</taxon>
        <taxon>Rubioideae</taxon>
        <taxon>Rubieae</taxon>
        <taxon>Rubia</taxon>
    </lineage>
</organism>
<dbReference type="EC" id="4.1.1.39" evidence="1"/>
<dbReference type="EMBL" id="X81104">
    <property type="protein sequence ID" value="CAA57010.1"/>
    <property type="molecule type" value="Genomic_DNA"/>
</dbReference>
<dbReference type="SMR" id="Q33050"/>
<dbReference type="GO" id="GO:0009507">
    <property type="term" value="C:chloroplast"/>
    <property type="evidence" value="ECO:0007669"/>
    <property type="project" value="UniProtKB-SubCell"/>
</dbReference>
<dbReference type="GO" id="GO:0000287">
    <property type="term" value="F:magnesium ion binding"/>
    <property type="evidence" value="ECO:0007669"/>
    <property type="project" value="InterPro"/>
</dbReference>
<dbReference type="GO" id="GO:0004497">
    <property type="term" value="F:monooxygenase activity"/>
    <property type="evidence" value="ECO:0007669"/>
    <property type="project" value="UniProtKB-KW"/>
</dbReference>
<dbReference type="GO" id="GO:0016984">
    <property type="term" value="F:ribulose-bisphosphate carboxylase activity"/>
    <property type="evidence" value="ECO:0007669"/>
    <property type="project" value="UniProtKB-EC"/>
</dbReference>
<dbReference type="GO" id="GO:0009853">
    <property type="term" value="P:photorespiration"/>
    <property type="evidence" value="ECO:0007669"/>
    <property type="project" value="UniProtKB-KW"/>
</dbReference>
<dbReference type="GO" id="GO:0019253">
    <property type="term" value="P:reductive pentose-phosphate cycle"/>
    <property type="evidence" value="ECO:0007669"/>
    <property type="project" value="UniProtKB-KW"/>
</dbReference>
<dbReference type="CDD" id="cd08212">
    <property type="entry name" value="RuBisCO_large_I"/>
    <property type="match status" value="1"/>
</dbReference>
<dbReference type="FunFam" id="3.20.20.110:FF:000003">
    <property type="entry name" value="Ribulose bisphosphate carboxylase large chain"/>
    <property type="match status" value="1"/>
</dbReference>
<dbReference type="FunFam" id="3.30.70.150:FF:000001">
    <property type="entry name" value="Ribulose bisphosphate carboxylase large chain"/>
    <property type="match status" value="1"/>
</dbReference>
<dbReference type="Gene3D" id="3.20.20.110">
    <property type="entry name" value="Ribulose bisphosphate carboxylase, large subunit, C-terminal domain"/>
    <property type="match status" value="1"/>
</dbReference>
<dbReference type="Gene3D" id="3.30.70.150">
    <property type="entry name" value="RuBisCO large subunit, N-terminal domain"/>
    <property type="match status" value="1"/>
</dbReference>
<dbReference type="HAMAP" id="MF_01338">
    <property type="entry name" value="RuBisCO_L_type1"/>
    <property type="match status" value="1"/>
</dbReference>
<dbReference type="InterPro" id="IPR033966">
    <property type="entry name" value="RuBisCO"/>
</dbReference>
<dbReference type="InterPro" id="IPR020878">
    <property type="entry name" value="RuBisCo_large_chain_AS"/>
</dbReference>
<dbReference type="InterPro" id="IPR000685">
    <property type="entry name" value="RuBisCO_lsu_C"/>
</dbReference>
<dbReference type="InterPro" id="IPR036376">
    <property type="entry name" value="RuBisCO_lsu_C_sf"/>
</dbReference>
<dbReference type="InterPro" id="IPR017443">
    <property type="entry name" value="RuBisCO_lsu_fd_N"/>
</dbReference>
<dbReference type="InterPro" id="IPR036422">
    <property type="entry name" value="RuBisCO_lsu_N_sf"/>
</dbReference>
<dbReference type="InterPro" id="IPR020888">
    <property type="entry name" value="RuBisCO_lsuI"/>
</dbReference>
<dbReference type="NCBIfam" id="NF003252">
    <property type="entry name" value="PRK04208.1"/>
    <property type="match status" value="1"/>
</dbReference>
<dbReference type="PANTHER" id="PTHR42704">
    <property type="entry name" value="RIBULOSE BISPHOSPHATE CARBOXYLASE"/>
    <property type="match status" value="1"/>
</dbReference>
<dbReference type="PANTHER" id="PTHR42704:SF16">
    <property type="entry name" value="RIBULOSE BISPHOSPHATE CARBOXYLASE LARGE CHAIN"/>
    <property type="match status" value="1"/>
</dbReference>
<dbReference type="Pfam" id="PF00016">
    <property type="entry name" value="RuBisCO_large"/>
    <property type="match status" value="1"/>
</dbReference>
<dbReference type="Pfam" id="PF02788">
    <property type="entry name" value="RuBisCO_large_N"/>
    <property type="match status" value="1"/>
</dbReference>
<dbReference type="SFLD" id="SFLDG01052">
    <property type="entry name" value="RuBisCO"/>
    <property type="match status" value="1"/>
</dbReference>
<dbReference type="SFLD" id="SFLDS00014">
    <property type="entry name" value="RuBisCO"/>
    <property type="match status" value="1"/>
</dbReference>
<dbReference type="SFLD" id="SFLDG00301">
    <property type="entry name" value="RuBisCO-like_proteins"/>
    <property type="match status" value="1"/>
</dbReference>
<dbReference type="SUPFAM" id="SSF51649">
    <property type="entry name" value="RuBisCo, C-terminal domain"/>
    <property type="match status" value="1"/>
</dbReference>
<dbReference type="SUPFAM" id="SSF54966">
    <property type="entry name" value="RuBisCO, large subunit, small (N-terminal) domain"/>
    <property type="match status" value="1"/>
</dbReference>
<dbReference type="PROSITE" id="PS00157">
    <property type="entry name" value="RUBISCO_LARGE"/>
    <property type="match status" value="1"/>
</dbReference>
<keyword id="KW-0007">Acetylation</keyword>
<keyword id="KW-0113">Calvin cycle</keyword>
<keyword id="KW-0120">Carbon dioxide fixation</keyword>
<keyword id="KW-0150">Chloroplast</keyword>
<keyword id="KW-1015">Disulfide bond</keyword>
<keyword id="KW-0456">Lyase</keyword>
<keyword id="KW-0460">Magnesium</keyword>
<keyword id="KW-0479">Metal-binding</keyword>
<keyword id="KW-0488">Methylation</keyword>
<keyword id="KW-0503">Monooxygenase</keyword>
<keyword id="KW-0560">Oxidoreductase</keyword>
<keyword id="KW-0601">Photorespiration</keyword>
<keyword id="KW-0602">Photosynthesis</keyword>
<keyword id="KW-0934">Plastid</keyword>
<feature type="propeptide" id="PRO_0000031393" evidence="1">
    <location>
        <begin position="1"/>
        <end position="2"/>
    </location>
</feature>
<feature type="chain" id="PRO_0000031394" description="Ribulose bisphosphate carboxylase large chain">
    <location>
        <begin position="3"/>
        <end position="453" status="greater than"/>
    </location>
</feature>
<feature type="active site" description="Proton acceptor" evidence="1">
    <location>
        <position position="175"/>
    </location>
</feature>
<feature type="active site" description="Proton acceptor" evidence="1">
    <location>
        <position position="294"/>
    </location>
</feature>
<feature type="binding site" description="in homodimeric partner" evidence="1">
    <location>
        <position position="123"/>
    </location>
    <ligand>
        <name>substrate</name>
    </ligand>
</feature>
<feature type="binding site" evidence="1">
    <location>
        <position position="173"/>
    </location>
    <ligand>
        <name>substrate</name>
    </ligand>
</feature>
<feature type="binding site" evidence="1">
    <location>
        <position position="177"/>
    </location>
    <ligand>
        <name>substrate</name>
    </ligand>
</feature>
<feature type="binding site" description="via carbamate group" evidence="1">
    <location>
        <position position="201"/>
    </location>
    <ligand>
        <name>Mg(2+)</name>
        <dbReference type="ChEBI" id="CHEBI:18420"/>
    </ligand>
</feature>
<feature type="binding site" evidence="1">
    <location>
        <position position="203"/>
    </location>
    <ligand>
        <name>Mg(2+)</name>
        <dbReference type="ChEBI" id="CHEBI:18420"/>
    </ligand>
</feature>
<feature type="binding site" evidence="1">
    <location>
        <position position="204"/>
    </location>
    <ligand>
        <name>Mg(2+)</name>
        <dbReference type="ChEBI" id="CHEBI:18420"/>
    </ligand>
</feature>
<feature type="binding site" evidence="1">
    <location>
        <position position="295"/>
    </location>
    <ligand>
        <name>substrate</name>
    </ligand>
</feature>
<feature type="binding site" evidence="1">
    <location>
        <position position="327"/>
    </location>
    <ligand>
        <name>substrate</name>
    </ligand>
</feature>
<feature type="binding site" evidence="1">
    <location>
        <position position="379"/>
    </location>
    <ligand>
        <name>substrate</name>
    </ligand>
</feature>
<feature type="site" description="Transition state stabilizer" evidence="1">
    <location>
        <position position="334"/>
    </location>
</feature>
<feature type="modified residue" description="N-acetylproline" evidence="1">
    <location>
        <position position="3"/>
    </location>
</feature>
<feature type="modified residue" description="N6,N6,N6-trimethyllysine" evidence="1">
    <location>
        <position position="14"/>
    </location>
</feature>
<feature type="modified residue" description="N6-carboxylysine" evidence="1">
    <location>
        <position position="201"/>
    </location>
</feature>
<feature type="disulfide bond" description="Interchain; in linked form" evidence="1">
    <location>
        <position position="247"/>
    </location>
</feature>
<feature type="non-terminal residue">
    <location>
        <position position="453"/>
    </location>
</feature>
<protein>
    <recommendedName>
        <fullName evidence="1">Ribulose bisphosphate carboxylase large chain</fullName>
        <shortName evidence="1">RuBisCO large subunit</shortName>
        <ecNumber evidence="1">4.1.1.39</ecNumber>
    </recommendedName>
</protein>
<reference key="1">
    <citation type="journal article" date="1995" name="J. Mol. Evol.">
        <title>Comparison of the evolution of ribulose-1, 5-biphosphate carboxylase (rbcL) and atpB-rbcL noncoding spacer sequences in a recent plant group, the tribe Rubieae (Rubiaceae).</title>
        <authorList>
            <person name="Manen J.F."/>
            <person name="Natali A."/>
        </authorList>
    </citation>
    <scope>NUCLEOTIDE SEQUENCE [GENOMIC DNA]</scope>
</reference>
<geneLocation type="chloroplast"/>
<accession>Q33050</accession>
<comment type="function">
    <text evidence="1">RuBisCO catalyzes two reactions: the carboxylation of D-ribulose 1,5-bisphosphate, the primary event in carbon dioxide fixation, as well as the oxidative fragmentation of the pentose substrate in the photorespiration process. Both reactions occur simultaneously and in competition at the same active site.</text>
</comment>
<comment type="catalytic activity">
    <reaction evidence="1">
        <text>2 (2R)-3-phosphoglycerate + 2 H(+) = D-ribulose 1,5-bisphosphate + CO2 + H2O</text>
        <dbReference type="Rhea" id="RHEA:23124"/>
        <dbReference type="ChEBI" id="CHEBI:15377"/>
        <dbReference type="ChEBI" id="CHEBI:15378"/>
        <dbReference type="ChEBI" id="CHEBI:16526"/>
        <dbReference type="ChEBI" id="CHEBI:57870"/>
        <dbReference type="ChEBI" id="CHEBI:58272"/>
        <dbReference type="EC" id="4.1.1.39"/>
    </reaction>
</comment>
<comment type="catalytic activity">
    <reaction evidence="1">
        <text>D-ribulose 1,5-bisphosphate + O2 = 2-phosphoglycolate + (2R)-3-phosphoglycerate + 2 H(+)</text>
        <dbReference type="Rhea" id="RHEA:36631"/>
        <dbReference type="ChEBI" id="CHEBI:15378"/>
        <dbReference type="ChEBI" id="CHEBI:15379"/>
        <dbReference type="ChEBI" id="CHEBI:57870"/>
        <dbReference type="ChEBI" id="CHEBI:58033"/>
        <dbReference type="ChEBI" id="CHEBI:58272"/>
    </reaction>
</comment>
<comment type="cofactor">
    <cofactor evidence="1">
        <name>Mg(2+)</name>
        <dbReference type="ChEBI" id="CHEBI:18420"/>
    </cofactor>
    <text evidence="1">Binds 1 Mg(2+) ion per subunit.</text>
</comment>
<comment type="subunit">
    <text evidence="1">Heterohexadecamer of 8 large chains and 8 small chains; disulfide-linked. The disulfide link is formed within the large subunit homodimers.</text>
</comment>
<comment type="subcellular location">
    <subcellularLocation>
        <location>Plastid</location>
        <location>Chloroplast</location>
    </subcellularLocation>
</comment>
<comment type="PTM">
    <text evidence="1">The disulfide bond which can form in the large chain dimeric partners within the hexadecamer appears to be associated with oxidative stress and protein turnover.</text>
</comment>
<comment type="miscellaneous">
    <text evidence="1">The basic functional RuBisCO is composed of a large chain homodimer in a 'head-to-tail' conformation. In form I RuBisCO this homodimer is arranged in a barrel-like tetramer with the small subunits forming a tetrameric 'cap' on each end of the 'barrel'.</text>
</comment>
<comment type="similarity">
    <text evidence="1">Belongs to the RuBisCO large chain family. Type I subfamily.</text>
</comment>
<gene>
    <name evidence="1" type="primary">rbcL</name>
</gene>
<evidence type="ECO:0000255" key="1">
    <source>
        <dbReference type="HAMAP-Rule" id="MF_01338"/>
    </source>
</evidence>
<sequence length="453" mass="50263">MSPQTETKASVGFKAGVKEYKLTYYTPEYETKDTDILAAFRVTAQPGVPPEERGAAVAAESSTGTWTTVWTDGLTSLDRYKGRCYHIEPVPGEEEQFIAYVAYPLDLFEEGSVTNMFTSIVGNVFGFKALRALRLEDLRIPVAYVKTFQGPPHGIQVERDKLNKYGRPLLGCTIKPKLGLSAKNYGRAVYECLRGGLDFTKDDENVNSQPFMRWRDRFLFCAEAIYKSQAETGEIKGHYLNATAGTCEEMIKRAVFARELAVPIVMHDYITGGFTANTSLAHYCRDNGLLLHIHRAMHAVIDRQKNHGMHFRVLAKALRMSGGDHIHAGTVVGKLEGERDITLGFVDLLRDDYIEKDRSRGIYFTQDWVSLPGVLPVASRGIHVWHMPALTEIFGDDSVLQFGGGTLGHPWGNAPGAVANRVALEACVKARNEGRDLAVDGGDIIREACKWSP</sequence>
<name>RBL_RUBTI</name>